<accession>B7MIR0</accession>
<comment type="function">
    <text evidence="1">Specifically methylates the adenine in position 37 of tRNA(1)(Val) (anticodon cmo5UAC).</text>
</comment>
<comment type="catalytic activity">
    <reaction evidence="1">
        <text>adenosine(37) in tRNA1(Val) + S-adenosyl-L-methionine = N(6)-methyladenosine(37) in tRNA1(Val) + S-adenosyl-L-homocysteine + H(+)</text>
        <dbReference type="Rhea" id="RHEA:43160"/>
        <dbReference type="Rhea" id="RHEA-COMP:10369"/>
        <dbReference type="Rhea" id="RHEA-COMP:10370"/>
        <dbReference type="ChEBI" id="CHEBI:15378"/>
        <dbReference type="ChEBI" id="CHEBI:57856"/>
        <dbReference type="ChEBI" id="CHEBI:59789"/>
        <dbReference type="ChEBI" id="CHEBI:74411"/>
        <dbReference type="ChEBI" id="CHEBI:74449"/>
        <dbReference type="EC" id="2.1.1.223"/>
    </reaction>
</comment>
<comment type="subcellular location">
    <subcellularLocation>
        <location evidence="1">Cytoplasm</location>
    </subcellularLocation>
</comment>
<comment type="similarity">
    <text evidence="1">Belongs to the methyltransferase superfamily. tRNA (adenine-N(6)-)-methyltransferase family.</text>
</comment>
<proteinExistence type="inferred from homology"/>
<keyword id="KW-0963">Cytoplasm</keyword>
<keyword id="KW-0489">Methyltransferase</keyword>
<keyword id="KW-1185">Reference proteome</keyword>
<keyword id="KW-0949">S-adenosyl-L-methionine</keyword>
<keyword id="KW-0808">Transferase</keyword>
<keyword id="KW-0819">tRNA processing</keyword>
<name>TRMN6_ECO45</name>
<reference key="1">
    <citation type="journal article" date="2009" name="PLoS Genet.">
        <title>Organised genome dynamics in the Escherichia coli species results in highly diverse adaptive paths.</title>
        <authorList>
            <person name="Touchon M."/>
            <person name="Hoede C."/>
            <person name="Tenaillon O."/>
            <person name="Barbe V."/>
            <person name="Baeriswyl S."/>
            <person name="Bidet P."/>
            <person name="Bingen E."/>
            <person name="Bonacorsi S."/>
            <person name="Bouchier C."/>
            <person name="Bouvet O."/>
            <person name="Calteau A."/>
            <person name="Chiapello H."/>
            <person name="Clermont O."/>
            <person name="Cruveiller S."/>
            <person name="Danchin A."/>
            <person name="Diard M."/>
            <person name="Dossat C."/>
            <person name="Karoui M.E."/>
            <person name="Frapy E."/>
            <person name="Garry L."/>
            <person name="Ghigo J.M."/>
            <person name="Gilles A.M."/>
            <person name="Johnson J."/>
            <person name="Le Bouguenec C."/>
            <person name="Lescat M."/>
            <person name="Mangenot S."/>
            <person name="Martinez-Jehanne V."/>
            <person name="Matic I."/>
            <person name="Nassif X."/>
            <person name="Oztas S."/>
            <person name="Petit M.A."/>
            <person name="Pichon C."/>
            <person name="Rouy Z."/>
            <person name="Ruf C.S."/>
            <person name="Schneider D."/>
            <person name="Tourret J."/>
            <person name="Vacherie B."/>
            <person name="Vallenet D."/>
            <person name="Medigue C."/>
            <person name="Rocha E.P.C."/>
            <person name="Denamur E."/>
        </authorList>
    </citation>
    <scope>NUCLEOTIDE SEQUENCE [LARGE SCALE GENOMIC DNA]</scope>
    <source>
        <strain>S88 / ExPEC</strain>
    </source>
</reference>
<feature type="chain" id="PRO_0000387371" description="tRNA1(Val) (adenine(37)-N6)-methyltransferase">
    <location>
        <begin position="1"/>
        <end position="245"/>
    </location>
</feature>
<sequence>MSQSTSVFRRNGFTFKQFFVAHDRCAMKVGTDGILLGAWAPVAGVKRCLDIGAGSGLLALMLAQRTDDSVMIDAVELESEAAAQAQENINQSPWAERINVHTADILQWITQQTVRFDLIISNPPYYQQGVECATPQREQARYTTTLDHPSLLTCAAECITEEGFFCVVLPEQIGNGFTELALSMGWHLRLRTDVAENEARLPHRVLLAFSPQAGECFSDRLVIRGPDQNYSEAYTALTQAFYLFM</sequence>
<dbReference type="EC" id="2.1.1.223" evidence="1"/>
<dbReference type="EMBL" id="CU928161">
    <property type="protein sequence ID" value="CAR04012.1"/>
    <property type="molecule type" value="Genomic_DNA"/>
</dbReference>
<dbReference type="SMR" id="B7MIR0"/>
<dbReference type="KEGG" id="ecz:ECS88_2749"/>
<dbReference type="HOGENOM" id="CLU_061983_0_0_6"/>
<dbReference type="Proteomes" id="UP000000747">
    <property type="component" value="Chromosome"/>
</dbReference>
<dbReference type="GO" id="GO:0005737">
    <property type="term" value="C:cytoplasm"/>
    <property type="evidence" value="ECO:0007669"/>
    <property type="project" value="UniProtKB-SubCell"/>
</dbReference>
<dbReference type="GO" id="GO:0003676">
    <property type="term" value="F:nucleic acid binding"/>
    <property type="evidence" value="ECO:0007669"/>
    <property type="project" value="InterPro"/>
</dbReference>
<dbReference type="GO" id="GO:0016430">
    <property type="term" value="F:tRNA (adenine-N6)-methyltransferase activity"/>
    <property type="evidence" value="ECO:0007669"/>
    <property type="project" value="UniProtKB-UniRule"/>
</dbReference>
<dbReference type="GO" id="GO:0032259">
    <property type="term" value="P:methylation"/>
    <property type="evidence" value="ECO:0007669"/>
    <property type="project" value="UniProtKB-KW"/>
</dbReference>
<dbReference type="GO" id="GO:0008033">
    <property type="term" value="P:tRNA processing"/>
    <property type="evidence" value="ECO:0007669"/>
    <property type="project" value="UniProtKB-UniRule"/>
</dbReference>
<dbReference type="CDD" id="cd02440">
    <property type="entry name" value="AdoMet_MTases"/>
    <property type="match status" value="1"/>
</dbReference>
<dbReference type="FunFam" id="3.40.50.150:FF:000087">
    <property type="entry name" value="tRNA1(Val) (adenine(37)-N6)-methyltransferase"/>
    <property type="match status" value="1"/>
</dbReference>
<dbReference type="Gene3D" id="3.40.50.150">
    <property type="entry name" value="Vaccinia Virus protein VP39"/>
    <property type="match status" value="1"/>
</dbReference>
<dbReference type="HAMAP" id="MF_01872">
    <property type="entry name" value="tRNA_methyltr_YfiC"/>
    <property type="match status" value="1"/>
</dbReference>
<dbReference type="InterPro" id="IPR002052">
    <property type="entry name" value="DNA_methylase_N6_adenine_CS"/>
</dbReference>
<dbReference type="InterPro" id="IPR029063">
    <property type="entry name" value="SAM-dependent_MTases_sf"/>
</dbReference>
<dbReference type="InterPro" id="IPR007848">
    <property type="entry name" value="Small_mtfrase_dom"/>
</dbReference>
<dbReference type="InterPro" id="IPR050210">
    <property type="entry name" value="tRNA_Adenine-N(6)_MTase"/>
</dbReference>
<dbReference type="InterPro" id="IPR022882">
    <property type="entry name" value="tRNA_adenine-N6_MeTrfase"/>
</dbReference>
<dbReference type="NCBIfam" id="NF047853">
    <property type="entry name" value="tRm6a37MtseTrmN"/>
    <property type="match status" value="1"/>
</dbReference>
<dbReference type="PANTHER" id="PTHR47739">
    <property type="entry name" value="TRNA1(VAL) (ADENINE(37)-N6)-METHYLTRANSFERASE"/>
    <property type="match status" value="1"/>
</dbReference>
<dbReference type="PANTHER" id="PTHR47739:SF1">
    <property type="entry name" value="TRNA1(VAL) (ADENINE(37)-N6)-METHYLTRANSFERASE"/>
    <property type="match status" value="1"/>
</dbReference>
<dbReference type="Pfam" id="PF05175">
    <property type="entry name" value="MTS"/>
    <property type="match status" value="1"/>
</dbReference>
<dbReference type="SUPFAM" id="SSF53335">
    <property type="entry name" value="S-adenosyl-L-methionine-dependent methyltransferases"/>
    <property type="match status" value="1"/>
</dbReference>
<dbReference type="PROSITE" id="PS00092">
    <property type="entry name" value="N6_MTASE"/>
    <property type="match status" value="1"/>
</dbReference>
<gene>
    <name evidence="1" type="primary">yfiC</name>
    <name type="ordered locus">ECS88_2749</name>
</gene>
<evidence type="ECO:0000255" key="1">
    <source>
        <dbReference type="HAMAP-Rule" id="MF_01872"/>
    </source>
</evidence>
<protein>
    <recommendedName>
        <fullName evidence="1">tRNA1(Val) (adenine(37)-N6)-methyltransferase</fullName>
        <ecNumber evidence="1">2.1.1.223</ecNumber>
    </recommendedName>
    <alternativeName>
        <fullName evidence="1">tRNA m6A37 methyltransferase</fullName>
    </alternativeName>
</protein>
<organism>
    <name type="scientific">Escherichia coli O45:K1 (strain S88 / ExPEC)</name>
    <dbReference type="NCBI Taxonomy" id="585035"/>
    <lineage>
        <taxon>Bacteria</taxon>
        <taxon>Pseudomonadati</taxon>
        <taxon>Pseudomonadota</taxon>
        <taxon>Gammaproteobacteria</taxon>
        <taxon>Enterobacterales</taxon>
        <taxon>Enterobacteriaceae</taxon>
        <taxon>Escherichia</taxon>
    </lineage>
</organism>